<gene>
    <name type="primary">galA</name>
    <name type="ORF">AFUA_1G06910</name>
</gene>
<evidence type="ECO:0000250" key="1"/>
<evidence type="ECO:0000255" key="2"/>
<evidence type="ECO:0000305" key="3"/>
<proteinExistence type="inferred from homology"/>
<comment type="function">
    <text evidence="1">Endogalactanase involved in the degradation of plant cell wall polysaccharides, and more particularly of hairy regions of pectin.</text>
</comment>
<comment type="catalytic activity">
    <reaction>
        <text>The enzyme specifically hydrolyzes (1-&gt;4)-beta-D-galactosidic linkages in type I arabinogalactans.</text>
        <dbReference type="EC" id="3.2.1.89"/>
    </reaction>
</comment>
<comment type="subcellular location">
    <subcellularLocation>
        <location evidence="1">Secreted</location>
    </subcellularLocation>
</comment>
<comment type="similarity">
    <text evidence="3">Belongs to the glycosyl hydrolase 53 family.</text>
</comment>
<comment type="sequence caution" evidence="3">
    <conflict type="erroneous initiation">
        <sequence resource="EMBL-CDS" id="EAL88402"/>
    </conflict>
    <text>Extended N-terminus.</text>
</comment>
<dbReference type="EC" id="3.2.1.89"/>
<dbReference type="EMBL" id="AAHF01000007">
    <property type="protein sequence ID" value="EAL88402.1"/>
    <property type="status" value="ALT_INIT"/>
    <property type="molecule type" value="Genomic_DNA"/>
</dbReference>
<dbReference type="RefSeq" id="XP_750440.1">
    <property type="nucleotide sequence ID" value="XM_745347.1"/>
</dbReference>
<dbReference type="SMR" id="Q4WJ80"/>
<dbReference type="STRING" id="330879.Q4WJ80"/>
<dbReference type="GlyCosmos" id="Q4WJ80">
    <property type="glycosylation" value="1 site, No reported glycans"/>
</dbReference>
<dbReference type="GeneID" id="3507699"/>
<dbReference type="KEGG" id="afm:AFUA_1G06910"/>
<dbReference type="eggNOG" id="ENOG502QU6R">
    <property type="taxonomic scope" value="Eukaryota"/>
</dbReference>
<dbReference type="HOGENOM" id="CLU_011259_0_0_1"/>
<dbReference type="InParanoid" id="Q4WJ80"/>
<dbReference type="OrthoDB" id="110914at2759"/>
<dbReference type="Proteomes" id="UP000002530">
    <property type="component" value="Chromosome 1"/>
</dbReference>
<dbReference type="GO" id="GO:0005576">
    <property type="term" value="C:extracellular region"/>
    <property type="evidence" value="ECO:0000250"/>
    <property type="project" value="UniProtKB"/>
</dbReference>
<dbReference type="GO" id="GO:0031218">
    <property type="term" value="F:arabinogalactan endo-1,4-beta-galactosidase activity"/>
    <property type="evidence" value="ECO:0000250"/>
    <property type="project" value="UniProtKB"/>
</dbReference>
<dbReference type="GO" id="GO:0015926">
    <property type="term" value="F:glucosidase activity"/>
    <property type="evidence" value="ECO:0007669"/>
    <property type="project" value="InterPro"/>
</dbReference>
<dbReference type="GO" id="GO:0071555">
    <property type="term" value="P:cell wall organization"/>
    <property type="evidence" value="ECO:0007669"/>
    <property type="project" value="UniProtKB-KW"/>
</dbReference>
<dbReference type="GO" id="GO:0045490">
    <property type="term" value="P:pectin catabolic process"/>
    <property type="evidence" value="ECO:0000250"/>
    <property type="project" value="UniProtKB"/>
</dbReference>
<dbReference type="FunFam" id="3.20.20.80:FF:000077">
    <property type="entry name" value="Arabinogalactan endo-beta-1,4-galactanase"/>
    <property type="match status" value="1"/>
</dbReference>
<dbReference type="Gene3D" id="3.20.20.80">
    <property type="entry name" value="Glycosidases"/>
    <property type="match status" value="1"/>
</dbReference>
<dbReference type="InterPro" id="IPR011683">
    <property type="entry name" value="Glyco_hydro_53"/>
</dbReference>
<dbReference type="InterPro" id="IPR017853">
    <property type="entry name" value="Glycoside_hydrolase_SF"/>
</dbReference>
<dbReference type="PANTHER" id="PTHR34983">
    <property type="entry name" value="ARABINOGALACTAN ENDO-BETA-1,4-GALACTANASE A"/>
    <property type="match status" value="1"/>
</dbReference>
<dbReference type="PANTHER" id="PTHR34983:SF1">
    <property type="entry name" value="ARABINOGALACTAN ENDO-BETA-1,4-GALACTANASE A"/>
    <property type="match status" value="1"/>
</dbReference>
<dbReference type="Pfam" id="PF07745">
    <property type="entry name" value="Glyco_hydro_53"/>
    <property type="match status" value="1"/>
</dbReference>
<dbReference type="SUPFAM" id="SSF51445">
    <property type="entry name" value="(Trans)glycosidases"/>
    <property type="match status" value="1"/>
</dbReference>
<feature type="signal peptide" evidence="2">
    <location>
        <begin position="1"/>
        <end position="21"/>
    </location>
</feature>
<feature type="chain" id="PRO_0000394946" description="Probable arabinogalactan endo-beta-1,4-galactanase A">
    <location>
        <begin position="22"/>
        <end position="356"/>
    </location>
</feature>
<feature type="active site" description="Proton donor" evidence="1">
    <location>
        <position position="157"/>
    </location>
</feature>
<feature type="active site" description="Nucleophile" evidence="1">
    <location>
        <position position="268"/>
    </location>
</feature>
<feature type="glycosylation site" description="N-linked (GlcNAc...) asparagine" evidence="2">
    <location>
        <position position="133"/>
    </location>
</feature>
<organism>
    <name type="scientific">Aspergillus fumigatus (strain ATCC MYA-4609 / CBS 101355 / FGSC A1100 / Af293)</name>
    <name type="common">Neosartorya fumigata</name>
    <dbReference type="NCBI Taxonomy" id="330879"/>
    <lineage>
        <taxon>Eukaryota</taxon>
        <taxon>Fungi</taxon>
        <taxon>Dikarya</taxon>
        <taxon>Ascomycota</taxon>
        <taxon>Pezizomycotina</taxon>
        <taxon>Eurotiomycetes</taxon>
        <taxon>Eurotiomycetidae</taxon>
        <taxon>Eurotiales</taxon>
        <taxon>Aspergillaceae</taxon>
        <taxon>Aspergillus</taxon>
        <taxon>Aspergillus subgen. Fumigati</taxon>
    </lineage>
</organism>
<name>GANA_ASPFU</name>
<sequence length="356" mass="39105">MLGKTVLLPLLVLLCHSLASASLVYRGADISSLLIEEKAGIEYKNVNGQTQPLENILKANGVNSVRQRVWVNPSDGSYNLDYNVKLAKRVKAAGMSVYLDLHFSDTWADPSHQTTPRGWSTNDIGTLTWQVYNYTMEVCNTFASNGIDVSIVAIGNEIRNGLLWPLGKPDNYANIANILHSAAFGVKDSTLSPKPKIMIHLDNGWDWSAQKFFYNRVLSSGANLVKSDFDLIGVSYYPFYNPSATLSALTTSLKNLRSTYGKDVLVVETDWPVSCPNPAYAFPSDLKDIPFSVAGQTTFVQRVANIVAQTPGGIGLYYWEPAWVQNAALGSSCADNLMVDWSTRQARTSLSVFATI</sequence>
<accession>Q4WJ80</accession>
<protein>
    <recommendedName>
        <fullName>Probable arabinogalactan endo-beta-1,4-galactanase A</fullName>
        <ecNumber>3.2.1.89</ecNumber>
    </recommendedName>
    <alternativeName>
        <fullName>Endo-1,4-beta-galactanase A</fullName>
        <shortName>Galactanase A</shortName>
    </alternativeName>
</protein>
<reference key="1">
    <citation type="journal article" date="2005" name="Nature">
        <title>Genomic sequence of the pathogenic and allergenic filamentous fungus Aspergillus fumigatus.</title>
        <authorList>
            <person name="Nierman W.C."/>
            <person name="Pain A."/>
            <person name="Anderson M.J."/>
            <person name="Wortman J.R."/>
            <person name="Kim H.S."/>
            <person name="Arroyo J."/>
            <person name="Berriman M."/>
            <person name="Abe K."/>
            <person name="Archer D.B."/>
            <person name="Bermejo C."/>
            <person name="Bennett J.W."/>
            <person name="Bowyer P."/>
            <person name="Chen D."/>
            <person name="Collins M."/>
            <person name="Coulsen R."/>
            <person name="Davies R."/>
            <person name="Dyer P.S."/>
            <person name="Farman M.L."/>
            <person name="Fedorova N."/>
            <person name="Fedorova N.D."/>
            <person name="Feldblyum T.V."/>
            <person name="Fischer R."/>
            <person name="Fosker N."/>
            <person name="Fraser A."/>
            <person name="Garcia J.L."/>
            <person name="Garcia M.J."/>
            <person name="Goble A."/>
            <person name="Goldman G.H."/>
            <person name="Gomi K."/>
            <person name="Griffith-Jones S."/>
            <person name="Gwilliam R."/>
            <person name="Haas B.J."/>
            <person name="Haas H."/>
            <person name="Harris D.E."/>
            <person name="Horiuchi H."/>
            <person name="Huang J."/>
            <person name="Humphray S."/>
            <person name="Jimenez J."/>
            <person name="Keller N."/>
            <person name="Khouri H."/>
            <person name="Kitamoto K."/>
            <person name="Kobayashi T."/>
            <person name="Konzack S."/>
            <person name="Kulkarni R."/>
            <person name="Kumagai T."/>
            <person name="Lafton A."/>
            <person name="Latge J.-P."/>
            <person name="Li W."/>
            <person name="Lord A."/>
            <person name="Lu C."/>
            <person name="Majoros W.H."/>
            <person name="May G.S."/>
            <person name="Miller B.L."/>
            <person name="Mohamoud Y."/>
            <person name="Molina M."/>
            <person name="Monod M."/>
            <person name="Mouyna I."/>
            <person name="Mulligan S."/>
            <person name="Murphy L.D."/>
            <person name="O'Neil S."/>
            <person name="Paulsen I."/>
            <person name="Penalva M.A."/>
            <person name="Pertea M."/>
            <person name="Price C."/>
            <person name="Pritchard B.L."/>
            <person name="Quail M.A."/>
            <person name="Rabbinowitsch E."/>
            <person name="Rawlins N."/>
            <person name="Rajandream M.A."/>
            <person name="Reichard U."/>
            <person name="Renauld H."/>
            <person name="Robson G.D."/>
            <person name="Rodriguez de Cordoba S."/>
            <person name="Rodriguez-Pena J.M."/>
            <person name="Ronning C.M."/>
            <person name="Rutter S."/>
            <person name="Salzberg S.L."/>
            <person name="Sanchez M."/>
            <person name="Sanchez-Ferrero J.C."/>
            <person name="Saunders D."/>
            <person name="Seeger K."/>
            <person name="Squares R."/>
            <person name="Squares S."/>
            <person name="Takeuchi M."/>
            <person name="Tekaia F."/>
            <person name="Turner G."/>
            <person name="Vazquez de Aldana C.R."/>
            <person name="Weidman J."/>
            <person name="White O."/>
            <person name="Woodward J.R."/>
            <person name="Yu J.-H."/>
            <person name="Fraser C.M."/>
            <person name="Galagan J.E."/>
            <person name="Asai K."/>
            <person name="Machida M."/>
            <person name="Hall N."/>
            <person name="Barrell B.G."/>
            <person name="Denning D.W."/>
        </authorList>
    </citation>
    <scope>NUCLEOTIDE SEQUENCE [LARGE SCALE GENOMIC DNA]</scope>
    <source>
        <strain>ATCC MYA-4609 / CBS 101355 / FGSC A1100 / Af293</strain>
    </source>
</reference>
<keyword id="KW-0119">Carbohydrate metabolism</keyword>
<keyword id="KW-0961">Cell wall biogenesis/degradation</keyword>
<keyword id="KW-0325">Glycoprotein</keyword>
<keyword id="KW-0326">Glycosidase</keyword>
<keyword id="KW-0378">Hydrolase</keyword>
<keyword id="KW-0624">Polysaccharide degradation</keyword>
<keyword id="KW-1185">Reference proteome</keyword>
<keyword id="KW-0964">Secreted</keyword>
<keyword id="KW-0732">Signal</keyword>